<gene>
    <name type="primary">ygeX</name>
    <name type="ordered locus">b2871</name>
    <name type="ordered locus">JW2839</name>
</gene>
<organism>
    <name type="scientific">Escherichia coli (strain K12)</name>
    <dbReference type="NCBI Taxonomy" id="83333"/>
    <lineage>
        <taxon>Bacteria</taxon>
        <taxon>Pseudomonadati</taxon>
        <taxon>Pseudomonadota</taxon>
        <taxon>Gammaproteobacteria</taxon>
        <taxon>Enterobacterales</taxon>
        <taxon>Enterobacteriaceae</taxon>
        <taxon>Escherichia</taxon>
    </lineage>
</organism>
<keyword id="KW-0002">3D-structure</keyword>
<keyword id="KW-1015">Disulfide bond</keyword>
<keyword id="KW-0456">Lyase</keyword>
<keyword id="KW-0663">Pyridoxal phosphate</keyword>
<keyword id="KW-1185">Reference proteome</keyword>
<proteinExistence type="evidence at protein level"/>
<accession>P66899</accession>
<accession>Q2M9W9</accession>
<accession>Q46804</accession>
<reference key="1">
    <citation type="journal article" date="1997" name="Science">
        <title>The complete genome sequence of Escherichia coli K-12.</title>
        <authorList>
            <person name="Blattner F.R."/>
            <person name="Plunkett G. III"/>
            <person name="Bloch C.A."/>
            <person name="Perna N.T."/>
            <person name="Burland V."/>
            <person name="Riley M."/>
            <person name="Collado-Vides J."/>
            <person name="Glasner J.D."/>
            <person name="Rode C.K."/>
            <person name="Mayhew G.F."/>
            <person name="Gregor J."/>
            <person name="Davis N.W."/>
            <person name="Kirkpatrick H.A."/>
            <person name="Goeden M.A."/>
            <person name="Rose D.J."/>
            <person name="Mau B."/>
            <person name="Shao Y."/>
        </authorList>
    </citation>
    <scope>NUCLEOTIDE SEQUENCE [LARGE SCALE GENOMIC DNA]</scope>
    <source>
        <strain>K12 / MG1655 / ATCC 47076</strain>
    </source>
</reference>
<reference key="2">
    <citation type="journal article" date="2006" name="Mol. Syst. Biol.">
        <title>Highly accurate genome sequences of Escherichia coli K-12 strains MG1655 and W3110.</title>
        <authorList>
            <person name="Hayashi K."/>
            <person name="Morooka N."/>
            <person name="Yamamoto Y."/>
            <person name="Fujita K."/>
            <person name="Isono K."/>
            <person name="Choi S."/>
            <person name="Ohtsubo E."/>
            <person name="Baba T."/>
            <person name="Wanner B.L."/>
            <person name="Mori H."/>
            <person name="Horiuchi T."/>
        </authorList>
    </citation>
    <scope>NUCLEOTIDE SEQUENCE [LARGE SCALE GENOMIC DNA]</scope>
    <source>
        <strain>K12 / W3110 / ATCC 27325 / DSM 5911</strain>
    </source>
</reference>
<reference key="3">
    <citation type="journal article" date="2002" name="Biosci. Biotechnol. Biochem.">
        <title>Gene cloning, purification, and characterization of 2,3-diaminopropionate ammonia-lyase from Escherichia coli.</title>
        <authorList>
            <person name="Uo T."/>
            <person name="Yoshimura T."/>
            <person name="Nishiyama T."/>
            <person name="Esaki N."/>
        </authorList>
    </citation>
    <scope>FUNCTION</scope>
    <scope>CATALYTIC ACTIVITY</scope>
    <scope>ACTIVE SITE</scope>
    <scope>BIOPHYSICOCHEMICAL PROPERTIES</scope>
    <scope>SUBSTRATES</scope>
    <scope>SUBUNIT</scope>
</reference>
<reference key="4">
    <citation type="journal article" date="2003" name="Biochem. Biophys. Res. Commun.">
        <title>Characterization of recombinant diaminopropionate ammonia-lyase from Escherichia coli and Salmonella typhimurium.</title>
        <authorList>
            <person name="Khan F."/>
            <person name="Jala V.R."/>
            <person name="Rao N.A."/>
            <person name="Savithri H.S."/>
        </authorList>
    </citation>
    <scope>FUNCTION</scope>
    <scope>COFACTOR</scope>
    <scope>SUBUNIT</scope>
</reference>
<reference key="5">
    <citation type="journal article" date="2012" name="J. Bacteriol.">
        <title>Functional analysis of the genes encoding diaminopropionate ammonia lyase in Escherichia coli and Salmonella enterica serovar Typhimurium.</title>
        <authorList>
            <person name="Kalyani J.N."/>
            <person name="Ramachandra N."/>
            <person name="Kachroo A.H."/>
            <person name="Mahadevan S."/>
            <person name="Savithri H.S."/>
        </authorList>
    </citation>
    <scope>FUNCTION</scope>
    <scope>INDUCTION</scope>
    <scope>DISRUPTION PHENOTYPE</scope>
    <source>
        <strain>K12</strain>
    </source>
</reference>
<reference key="6">
    <citation type="journal article" date="2012" name="J. Biol. Chem.">
        <title>Crystal structure of Escherichia coli diaminopropionate ammonia-lyase reveals mechanism of enzyme activation and catalysis.</title>
        <authorList>
            <person name="Bisht S."/>
            <person name="Rajaram V."/>
            <person name="Bharath S.R."/>
            <person name="Kalyani J.N."/>
            <person name="Khan F."/>
            <person name="Rao A.N."/>
            <person name="Savithri H.S."/>
            <person name="Murthy M.R."/>
        </authorList>
    </citation>
    <scope>X-RAY CRYSTALLOGRAPHY (2.00 ANGSTROMS) ALONE AND IN COMPLEX WITH SUBSTRATE</scope>
    <scope>FUNCTION</scope>
    <scope>REACTION MECHANISM</scope>
    <scope>COFACTOR</scope>
    <scope>ACTIVE SITE</scope>
    <scope>SUBUNIT</scope>
    <scope>DISULFIDE BOND</scope>
    <scope>MUTAGENESIS OF LYS-77; ASP-120 AND ASP-189</scope>
</reference>
<comment type="function">
    <text evidence="1 2 3 4">Catalyzes the alpha,beta-elimination reaction of both L- and D-alpha,beta-diaminopropionate (DAP) to form pyruvate and ammonia. In vitro the D-isomer of serine is degraded to pyruvate, though very poorly; other amino acids (L-serine, D- and L-threonine, D- and L-beta-Cl-alanine) are not substrates. In vivo allows poor growth on L-DAP or a DL-DAP mixture but not on D-DAP alone, this may be due to a poor promoter. DL-DAP is toxic in the absence of this enzyme, it may inhibit enzymes involved in the synthesis of pyruvate and aspartate, as well as amino acids derived from them.</text>
</comment>
<comment type="catalytic activity">
    <reaction evidence="1">
        <text>(S)-2,3-diaminopropanoate + H2O + H(+) = pyruvate + 2 NH4(+)</text>
        <dbReference type="Rhea" id="RHEA:22084"/>
        <dbReference type="ChEBI" id="CHEBI:15361"/>
        <dbReference type="ChEBI" id="CHEBI:15377"/>
        <dbReference type="ChEBI" id="CHEBI:15378"/>
        <dbReference type="ChEBI" id="CHEBI:28938"/>
        <dbReference type="ChEBI" id="CHEBI:57721"/>
        <dbReference type="EC" id="4.3.1.15"/>
    </reaction>
</comment>
<comment type="catalytic activity">
    <reaction evidence="1">
        <text>(R)-2,3-diaminopropanoate + H2O + H(+) = pyruvate + 2 NH4(+)</text>
        <dbReference type="Rhea" id="RHEA:52432"/>
        <dbReference type="ChEBI" id="CHEBI:15361"/>
        <dbReference type="ChEBI" id="CHEBI:15377"/>
        <dbReference type="ChEBI" id="CHEBI:15378"/>
        <dbReference type="ChEBI" id="CHEBI:28938"/>
        <dbReference type="ChEBI" id="CHEBI:136599"/>
        <dbReference type="EC" id="4.3.1.15"/>
    </reaction>
</comment>
<comment type="cofactor">
    <cofactor evidence="2 3">
        <name>pyridoxal 5'-phosphate</name>
        <dbReference type="ChEBI" id="CHEBI:597326"/>
    </cofactor>
    <text evidence="2 3">Binds 1 pyridoxal phosphate per subunit.</text>
</comment>
<comment type="biophysicochemical properties">
    <kinetics>
        <KM evidence="1">0.1 mM for D-DAP</KM>
        <KM evidence="1">0.048 mM for L-DAP</KM>
        <Vmax evidence="1">48.0 umol/min/mg enzyme for D-DAP</Vmax>
        <Vmax evidence="1">25.0 umol/min/mg enzyme for L-DAP</Vmax>
    </kinetics>
    <phDependence>
        <text evidence="1">Optimum pH is 8.0.</text>
    </phDependence>
</comment>
<comment type="subunit">
    <text evidence="6 7 8">Homodimer.</text>
</comment>
<comment type="induction">
    <text evidence="4">Slightly induced by DL-DAP.</text>
</comment>
<comment type="disruption phenotype">
    <text evidence="4">No growth on minimal medium plus DL-DAP; growth can be restored by a mix of 8 amino acids (Arg, Asn, Cys, Glu, Ile, Leu, Met and Thr).</text>
</comment>
<comment type="similarity">
    <text evidence="5">Belongs to the diaminopropionate ammonia-lyase family.</text>
</comment>
<sequence>MSVFSLKIDIADNKFFNGETSPLFSQSQAKLARQFHQKIAGYRPTPLCALDDLANLFGVKKILVKDESKRFGLNAFKMLGGAYAIAQLLCEKYHLDIETLSFEHLKNAIGEKMTFATTTDGNHGRGVAWAAQQLGQNAVIYMPKGSAQERVDAILNLGAECIVTDMNYDDTVRLTMQHAQQHGWEVVQDTAWEGYTKIPTWIMQGYATLADEAVEQMREMGVTPTHVLLQAGVGAMAGGVLGYLVDVYSPQNLHSIIVEPDKADCIYRSGVKGDIVNVGGDMATIMAGLACGEPNPLGWEILRNCATQFISCQDSVAALGMRVLGNPYGNDPRIISGESGAVGLGVLAAVHYHPQRQSLMEKLALNKDAVVLVISTEGDTDVKHYREVVWEGKHAVAP</sequence>
<feature type="chain" id="PRO_0000185590" description="Diaminopropionate ammonia-lyase">
    <location>
        <begin position="1"/>
        <end position="398"/>
    </location>
</feature>
<feature type="active site" description="Proton acceptor; for D-DAP ammonia-lyase activity" evidence="5">
    <location>
        <position position="77"/>
    </location>
</feature>
<feature type="active site" description="Proton acceptor; for L-DAP ammonia-lyase activity" evidence="5">
    <location>
        <position position="120"/>
    </location>
</feature>
<feature type="modified residue" description="N6-(pyridoxal phosphate)lysine">
    <location>
        <position position="77"/>
    </location>
</feature>
<feature type="disulfide bond" evidence="3">
    <location>
        <begin position="265"/>
        <end position="291"/>
    </location>
</feature>
<feature type="mutagenesis site" description="No longer binds cofactor, loss of enzymatic activity." evidence="3">
    <original>K</original>
    <variation>H</variation>
    <variation>R</variation>
    <location>
        <position position="77"/>
    </location>
</feature>
<feature type="mutagenesis site" description="No activity on D-DAP, 150-fold reduced catalytic efficiency for L-DAP; alters substrate stereospecificity." evidence="3">
    <original>D</original>
    <variation>N</variation>
    <location>
        <position position="120"/>
    </location>
</feature>
<feature type="mutagenesis site" description="10000-fold reduced catalytic efficiency for both D- and L-DAP." evidence="3">
    <original>D</original>
    <variation>N</variation>
    <location>
        <position position="189"/>
    </location>
</feature>
<feature type="strand" evidence="10">
    <location>
        <begin position="8"/>
        <end position="12"/>
    </location>
</feature>
<feature type="helix" evidence="11">
    <location>
        <begin position="22"/>
        <end position="24"/>
    </location>
</feature>
<feature type="helix" evidence="10">
    <location>
        <begin position="26"/>
        <end position="36"/>
    </location>
</feature>
<feature type="strand" evidence="10">
    <location>
        <begin position="47"/>
        <end position="49"/>
    </location>
</feature>
<feature type="helix" evidence="10">
    <location>
        <begin position="51"/>
        <end position="57"/>
    </location>
</feature>
<feature type="strand" evidence="10">
    <location>
        <begin position="59"/>
        <end position="66"/>
    </location>
</feature>
<feature type="helix" evidence="10">
    <location>
        <begin position="67"/>
        <end position="69"/>
    </location>
</feature>
<feature type="turn" evidence="10">
    <location>
        <begin position="71"/>
        <end position="74"/>
    </location>
</feature>
<feature type="helix" evidence="10">
    <location>
        <begin position="81"/>
        <end position="93"/>
    </location>
</feature>
<feature type="helix" evidence="10">
    <location>
        <begin position="97"/>
        <end position="99"/>
    </location>
</feature>
<feature type="helix" evidence="10">
    <location>
        <begin position="102"/>
        <end position="107"/>
    </location>
</feature>
<feature type="strand" evidence="10">
    <location>
        <begin position="114"/>
        <end position="118"/>
    </location>
</feature>
<feature type="helix" evidence="10">
    <location>
        <begin position="122"/>
        <end position="134"/>
    </location>
</feature>
<feature type="strand" evidence="10">
    <location>
        <begin position="137"/>
        <end position="142"/>
    </location>
</feature>
<feature type="helix" evidence="10">
    <location>
        <begin position="148"/>
        <end position="155"/>
    </location>
</feature>
<feature type="turn" evidence="10">
    <location>
        <begin position="156"/>
        <end position="158"/>
    </location>
</feature>
<feature type="strand" evidence="10">
    <location>
        <begin position="160"/>
        <end position="163"/>
    </location>
</feature>
<feature type="helix" evidence="10">
    <location>
        <begin position="168"/>
        <end position="182"/>
    </location>
</feature>
<feature type="helix" evidence="10">
    <location>
        <begin position="197"/>
        <end position="219"/>
    </location>
</feature>
<feature type="strand" evidence="10">
    <location>
        <begin position="225"/>
        <end position="230"/>
    </location>
</feature>
<feature type="strand" evidence="10">
    <location>
        <begin position="232"/>
        <end position="234"/>
    </location>
</feature>
<feature type="helix" evidence="10">
    <location>
        <begin position="235"/>
        <end position="248"/>
    </location>
</feature>
<feature type="helix" evidence="11">
    <location>
        <begin position="250"/>
        <end position="252"/>
    </location>
</feature>
<feature type="strand" evidence="10">
    <location>
        <begin position="254"/>
        <end position="260"/>
    </location>
</feature>
<feature type="helix" evidence="9">
    <location>
        <begin position="261"/>
        <end position="263"/>
    </location>
</feature>
<feature type="helix" evidence="10">
    <location>
        <begin position="265"/>
        <end position="272"/>
    </location>
</feature>
<feature type="helix" evidence="10">
    <location>
        <begin position="296"/>
        <end position="305"/>
    </location>
</feature>
<feature type="strand" evidence="10">
    <location>
        <begin position="308"/>
        <end position="312"/>
    </location>
</feature>
<feature type="helix" evidence="10">
    <location>
        <begin position="315"/>
        <end position="325"/>
    </location>
</feature>
<feature type="helix" evidence="10">
    <location>
        <begin position="338"/>
        <end position="352"/>
    </location>
</feature>
<feature type="helix" evidence="10">
    <location>
        <begin position="356"/>
        <end position="362"/>
    </location>
</feature>
<feature type="strand" evidence="10">
    <location>
        <begin position="370"/>
        <end position="375"/>
    </location>
</feature>
<feature type="strand" evidence="11">
    <location>
        <begin position="379"/>
        <end position="381"/>
    </location>
</feature>
<feature type="helix" evidence="10">
    <location>
        <begin position="382"/>
        <end position="389"/>
    </location>
</feature>
<protein>
    <recommendedName>
        <fullName>Diaminopropionate ammonia-lyase</fullName>
        <shortName>DAPAL</shortName>
        <ecNumber evidence="1">4.3.1.15</ecNumber>
    </recommendedName>
    <alternativeName>
        <fullName>2,3-diaminopropionate ammonia-lyase</fullName>
    </alternativeName>
    <alternativeName>
        <fullName>Alpha,beta-diaminopropionate ammonia-lyase</fullName>
    </alternativeName>
    <alternativeName>
        <fullName>Diaminopropionatase</fullName>
    </alternativeName>
</protein>
<name>DPAL_ECOLI</name>
<dbReference type="EC" id="4.3.1.15" evidence="1"/>
<dbReference type="EMBL" id="U28375">
    <property type="protein sequence ID" value="AAA83052.1"/>
    <property type="molecule type" value="Genomic_DNA"/>
</dbReference>
<dbReference type="EMBL" id="U00096">
    <property type="protein sequence ID" value="AAC75909.1"/>
    <property type="molecule type" value="Genomic_DNA"/>
</dbReference>
<dbReference type="EMBL" id="AP009048">
    <property type="protein sequence ID" value="BAE76937.1"/>
    <property type="molecule type" value="Genomic_DNA"/>
</dbReference>
<dbReference type="PIR" id="G65070">
    <property type="entry name" value="G65070"/>
</dbReference>
<dbReference type="RefSeq" id="NP_417347.1">
    <property type="nucleotide sequence ID" value="NC_000913.3"/>
</dbReference>
<dbReference type="PDB" id="4D9G">
    <property type="method" value="X-ray"/>
    <property type="resolution" value="2.45 A"/>
    <property type="chains" value="A/B=1-398"/>
</dbReference>
<dbReference type="PDB" id="4D9I">
    <property type="method" value="X-ray"/>
    <property type="resolution" value="2.00 A"/>
    <property type="chains" value="A/B=1-398"/>
</dbReference>
<dbReference type="PDB" id="4D9K">
    <property type="method" value="X-ray"/>
    <property type="resolution" value="2.19 A"/>
    <property type="chains" value="A/B/C/D=1-398"/>
</dbReference>
<dbReference type="PDB" id="4D9M">
    <property type="method" value="X-ray"/>
    <property type="resolution" value="2.50 A"/>
    <property type="chains" value="A/B=1-398"/>
</dbReference>
<dbReference type="PDB" id="4D9N">
    <property type="method" value="X-ray"/>
    <property type="resolution" value="2.50 A"/>
    <property type="chains" value="A/B=1-398"/>
</dbReference>
<dbReference type="PDBsum" id="4D9G"/>
<dbReference type="PDBsum" id="4D9I"/>
<dbReference type="PDBsum" id="4D9K"/>
<dbReference type="PDBsum" id="4D9M"/>
<dbReference type="PDBsum" id="4D9N"/>
<dbReference type="SMR" id="P66899"/>
<dbReference type="BioGRID" id="4262322">
    <property type="interactions" value="15"/>
</dbReference>
<dbReference type="FunCoup" id="P66899">
    <property type="interactions" value="121"/>
</dbReference>
<dbReference type="IntAct" id="P66899">
    <property type="interactions" value="1"/>
</dbReference>
<dbReference type="STRING" id="511145.b2871"/>
<dbReference type="jPOST" id="P66899"/>
<dbReference type="PaxDb" id="511145-b2871"/>
<dbReference type="EnsemblBacteria" id="AAC75909">
    <property type="protein sequence ID" value="AAC75909"/>
    <property type="gene ID" value="b2871"/>
</dbReference>
<dbReference type="GeneID" id="947012"/>
<dbReference type="KEGG" id="ecj:JW2839"/>
<dbReference type="KEGG" id="eco:b2871"/>
<dbReference type="KEGG" id="ecoc:C3026_15750"/>
<dbReference type="PATRIC" id="fig|1411691.4.peg.3863"/>
<dbReference type="EchoBASE" id="EB2866"/>
<dbReference type="eggNOG" id="COG1171">
    <property type="taxonomic scope" value="Bacteria"/>
</dbReference>
<dbReference type="HOGENOM" id="CLU_021802_8_0_6"/>
<dbReference type="InParanoid" id="P66899"/>
<dbReference type="OMA" id="IQDTAWE"/>
<dbReference type="OrthoDB" id="34584at2"/>
<dbReference type="PhylomeDB" id="P66899"/>
<dbReference type="BioCyc" id="EcoCyc:G7490-MONOMER"/>
<dbReference type="BioCyc" id="MetaCyc:G7490-MONOMER"/>
<dbReference type="BRENDA" id="4.3.1.15">
    <property type="organism ID" value="2026"/>
</dbReference>
<dbReference type="SABIO-RK" id="P66899"/>
<dbReference type="EvolutionaryTrace" id="P66899"/>
<dbReference type="PRO" id="PR:P66899"/>
<dbReference type="Proteomes" id="UP000000625">
    <property type="component" value="Chromosome"/>
</dbReference>
<dbReference type="GO" id="GO:0008838">
    <property type="term" value="F:diaminopropionate ammonia-lyase activity"/>
    <property type="evidence" value="ECO:0000314"/>
    <property type="project" value="EcoCyc"/>
</dbReference>
<dbReference type="GO" id="GO:0042803">
    <property type="term" value="F:protein homodimerization activity"/>
    <property type="evidence" value="ECO:0000314"/>
    <property type="project" value="EcoCyc"/>
</dbReference>
<dbReference type="GO" id="GO:0030170">
    <property type="term" value="F:pyridoxal phosphate binding"/>
    <property type="evidence" value="ECO:0000314"/>
    <property type="project" value="EcoCyc"/>
</dbReference>
<dbReference type="CDD" id="cd00640">
    <property type="entry name" value="Trp-synth-beta_II"/>
    <property type="match status" value="1"/>
</dbReference>
<dbReference type="FunFam" id="3.40.50.1100:FF:000033">
    <property type="entry name" value="Diaminopropionate ammonia-lyase"/>
    <property type="match status" value="1"/>
</dbReference>
<dbReference type="FunFam" id="3.40.50.1100:FF:000034">
    <property type="entry name" value="Diaminopropionate ammonia-lyase"/>
    <property type="match status" value="1"/>
</dbReference>
<dbReference type="Gene3D" id="3.40.50.1100">
    <property type="match status" value="2"/>
</dbReference>
<dbReference type="InterPro" id="IPR010081">
    <property type="entry name" value="DiNH2opropionate_NH3_lyase"/>
</dbReference>
<dbReference type="InterPro" id="IPR019871">
    <property type="entry name" value="DiNH2propionate_NH3-lyase_sub"/>
</dbReference>
<dbReference type="InterPro" id="IPR001926">
    <property type="entry name" value="TrpB-like_PALP"/>
</dbReference>
<dbReference type="InterPro" id="IPR036052">
    <property type="entry name" value="TrpB-like_PALP_sf"/>
</dbReference>
<dbReference type="NCBIfam" id="TIGR03528">
    <property type="entry name" value="2_3_DAP_am_ly"/>
    <property type="match status" value="1"/>
</dbReference>
<dbReference type="NCBIfam" id="TIGR01747">
    <property type="entry name" value="diampropi_NH3ly"/>
    <property type="match status" value="1"/>
</dbReference>
<dbReference type="NCBIfam" id="NF006058">
    <property type="entry name" value="PRK08206.1"/>
    <property type="match status" value="1"/>
</dbReference>
<dbReference type="PANTHER" id="PTHR42937">
    <property type="match status" value="1"/>
</dbReference>
<dbReference type="PANTHER" id="PTHR42937:SF1">
    <property type="entry name" value="DIAMINOPROPIONATE AMMONIA-LYASE"/>
    <property type="match status" value="1"/>
</dbReference>
<dbReference type="Pfam" id="PF00291">
    <property type="entry name" value="PALP"/>
    <property type="match status" value="1"/>
</dbReference>
<dbReference type="SUPFAM" id="SSF53686">
    <property type="entry name" value="Tryptophan synthase beta subunit-like PLP-dependent enzymes"/>
    <property type="match status" value="1"/>
</dbReference>
<evidence type="ECO:0000269" key="1">
    <source>
    </source>
</evidence>
<evidence type="ECO:0000269" key="2">
    <source>
    </source>
</evidence>
<evidence type="ECO:0000269" key="3">
    <source>
    </source>
</evidence>
<evidence type="ECO:0000269" key="4">
    <source>
    </source>
</evidence>
<evidence type="ECO:0000305" key="5"/>
<evidence type="ECO:0000305" key="6">
    <source>
    </source>
</evidence>
<evidence type="ECO:0000305" key="7">
    <source>
    </source>
</evidence>
<evidence type="ECO:0000305" key="8">
    <source>
    </source>
</evidence>
<evidence type="ECO:0007829" key="9">
    <source>
        <dbReference type="PDB" id="4D9G"/>
    </source>
</evidence>
<evidence type="ECO:0007829" key="10">
    <source>
        <dbReference type="PDB" id="4D9I"/>
    </source>
</evidence>
<evidence type="ECO:0007829" key="11">
    <source>
        <dbReference type="PDB" id="4D9K"/>
    </source>
</evidence>